<protein>
    <recommendedName>
        <fullName evidence="1">ATP synthase gamma chain</fullName>
    </recommendedName>
    <alternativeName>
        <fullName evidence="1">ATP synthase F1 sector gamma subunit</fullName>
    </alternativeName>
    <alternativeName>
        <fullName evidence="1">F-ATPase gamma subunit</fullName>
    </alternativeName>
</protein>
<gene>
    <name evidence="1" type="primary">atpG</name>
    <name type="ordered locus">Dtur_0131</name>
</gene>
<comment type="function">
    <text evidence="1">Produces ATP from ADP in the presence of a proton gradient across the membrane. The gamma chain is believed to be important in regulating ATPase activity and the flow of protons through the CF(0) complex.</text>
</comment>
<comment type="subunit">
    <text evidence="1">F-type ATPases have 2 components, CF(1) - the catalytic core - and CF(0) - the membrane proton channel. CF(1) has five subunits: alpha(3), beta(3), gamma(1), delta(1), epsilon(1). CF(0) has three main subunits: a, b and c.</text>
</comment>
<comment type="subcellular location">
    <subcellularLocation>
        <location evidence="1">Cell inner membrane</location>
        <topology evidence="1">Peripheral membrane protein</topology>
    </subcellularLocation>
</comment>
<comment type="similarity">
    <text evidence="1">Belongs to the ATPase gamma chain family.</text>
</comment>
<feature type="chain" id="PRO_1000134141" description="ATP synthase gamma chain">
    <location>
        <begin position="1"/>
        <end position="290"/>
    </location>
</feature>
<name>ATPG_DICTD</name>
<dbReference type="EMBL" id="CP001251">
    <property type="protein sequence ID" value="ACK41463.1"/>
    <property type="molecule type" value="Genomic_DNA"/>
</dbReference>
<dbReference type="RefSeq" id="WP_012582548.1">
    <property type="nucleotide sequence ID" value="NC_011661.1"/>
</dbReference>
<dbReference type="RefSeq" id="YP_002352077.1">
    <property type="nucleotide sequence ID" value="NC_011661.1"/>
</dbReference>
<dbReference type="SMR" id="B8DYT1"/>
<dbReference type="FunCoup" id="B8DYT1">
    <property type="interactions" value="367"/>
</dbReference>
<dbReference type="STRING" id="515635.Dtur_0131"/>
<dbReference type="EnsemblBacteria" id="ACK41463">
    <property type="protein sequence ID" value="ACK41463"/>
    <property type="gene ID" value="Dtur_0131"/>
</dbReference>
<dbReference type="KEGG" id="dtu:Dtur_0131"/>
<dbReference type="eggNOG" id="COG0224">
    <property type="taxonomic scope" value="Bacteria"/>
</dbReference>
<dbReference type="HOGENOM" id="CLU_050669_0_1_0"/>
<dbReference type="InParanoid" id="B8DYT1"/>
<dbReference type="OrthoDB" id="9812769at2"/>
<dbReference type="Proteomes" id="UP000007719">
    <property type="component" value="Chromosome"/>
</dbReference>
<dbReference type="GO" id="GO:0005886">
    <property type="term" value="C:plasma membrane"/>
    <property type="evidence" value="ECO:0007669"/>
    <property type="project" value="UniProtKB-SubCell"/>
</dbReference>
<dbReference type="GO" id="GO:0045259">
    <property type="term" value="C:proton-transporting ATP synthase complex"/>
    <property type="evidence" value="ECO:0007669"/>
    <property type="project" value="UniProtKB-KW"/>
</dbReference>
<dbReference type="GO" id="GO:0005524">
    <property type="term" value="F:ATP binding"/>
    <property type="evidence" value="ECO:0007669"/>
    <property type="project" value="UniProtKB-UniRule"/>
</dbReference>
<dbReference type="GO" id="GO:0046933">
    <property type="term" value="F:proton-transporting ATP synthase activity, rotational mechanism"/>
    <property type="evidence" value="ECO:0007669"/>
    <property type="project" value="UniProtKB-UniRule"/>
</dbReference>
<dbReference type="GO" id="GO:0015986">
    <property type="term" value="P:proton motive force-driven ATP synthesis"/>
    <property type="evidence" value="ECO:0000318"/>
    <property type="project" value="GO_Central"/>
</dbReference>
<dbReference type="GO" id="GO:0042777">
    <property type="term" value="P:proton motive force-driven plasma membrane ATP synthesis"/>
    <property type="evidence" value="ECO:0007669"/>
    <property type="project" value="UniProtKB-UniRule"/>
</dbReference>
<dbReference type="CDD" id="cd12151">
    <property type="entry name" value="F1-ATPase_gamma"/>
    <property type="match status" value="1"/>
</dbReference>
<dbReference type="Gene3D" id="3.40.1380.10">
    <property type="match status" value="1"/>
</dbReference>
<dbReference type="Gene3D" id="1.10.287.80">
    <property type="entry name" value="ATP synthase, gamma subunit, helix hairpin domain"/>
    <property type="match status" value="1"/>
</dbReference>
<dbReference type="HAMAP" id="MF_00815">
    <property type="entry name" value="ATP_synth_gamma_bact"/>
    <property type="match status" value="1"/>
</dbReference>
<dbReference type="InterPro" id="IPR035968">
    <property type="entry name" value="ATP_synth_F1_ATPase_gsu"/>
</dbReference>
<dbReference type="InterPro" id="IPR000131">
    <property type="entry name" value="ATP_synth_F1_gsu"/>
</dbReference>
<dbReference type="NCBIfam" id="TIGR01146">
    <property type="entry name" value="ATPsyn_F1gamma"/>
    <property type="match status" value="1"/>
</dbReference>
<dbReference type="PANTHER" id="PTHR11693">
    <property type="entry name" value="ATP SYNTHASE GAMMA CHAIN"/>
    <property type="match status" value="1"/>
</dbReference>
<dbReference type="PANTHER" id="PTHR11693:SF22">
    <property type="entry name" value="ATP SYNTHASE SUBUNIT GAMMA, MITOCHONDRIAL"/>
    <property type="match status" value="1"/>
</dbReference>
<dbReference type="Pfam" id="PF00231">
    <property type="entry name" value="ATP-synt"/>
    <property type="match status" value="1"/>
</dbReference>
<dbReference type="PRINTS" id="PR00126">
    <property type="entry name" value="ATPASEGAMMA"/>
</dbReference>
<dbReference type="SUPFAM" id="SSF52943">
    <property type="entry name" value="ATP synthase (F1-ATPase), gamma subunit"/>
    <property type="match status" value="1"/>
</dbReference>
<sequence length="290" mass="34211">MPTLQGLRRKVKTIQNISHIIHSMETLSMVKIRALQDKSLRLKPYTEELNNILMELITRLPNEYLNHPLIRERSVYKTGILVFTSDLGFCGSYNLQIIESLKKFIEGKRAQNLVFYSIGFYAQRYLSSNNFNIRKKYIKFLEDTSFSQAKILSKDLLDDFLNYVIDELYVIYFEFINIVKQEVRIKKILPMIPVEVKERKEEYFLFLPSLSSILDPLLMDIFETQIHQIMLDSAASEQAFRRFAMKRAYDNAQKLHSKLIFQLNQLRQTQITKELLDITSSIEAMKEEVK</sequence>
<evidence type="ECO:0000255" key="1">
    <source>
        <dbReference type="HAMAP-Rule" id="MF_00815"/>
    </source>
</evidence>
<accession>B8DYT1</accession>
<organism>
    <name type="scientific">Dictyoglomus turgidum (strain DSM 6724 / Z-1310)</name>
    <dbReference type="NCBI Taxonomy" id="515635"/>
    <lineage>
        <taxon>Bacteria</taxon>
        <taxon>Pseudomonadati</taxon>
        <taxon>Dictyoglomota</taxon>
        <taxon>Dictyoglomia</taxon>
        <taxon>Dictyoglomales</taxon>
        <taxon>Dictyoglomaceae</taxon>
        <taxon>Dictyoglomus</taxon>
    </lineage>
</organism>
<keyword id="KW-0066">ATP synthesis</keyword>
<keyword id="KW-0997">Cell inner membrane</keyword>
<keyword id="KW-1003">Cell membrane</keyword>
<keyword id="KW-0139">CF(1)</keyword>
<keyword id="KW-0375">Hydrogen ion transport</keyword>
<keyword id="KW-0406">Ion transport</keyword>
<keyword id="KW-0472">Membrane</keyword>
<keyword id="KW-1185">Reference proteome</keyword>
<keyword id="KW-0813">Transport</keyword>
<proteinExistence type="inferred from homology"/>
<reference key="1">
    <citation type="journal article" date="2016" name="Front. Microbiol.">
        <title>The complete genome sequence of hyperthermophile Dictyoglomus turgidum DSM 6724 reveals a specialized carbohydrate fermentor.</title>
        <authorList>
            <person name="Brumm P.J."/>
            <person name="Gowda K."/>
            <person name="Robb F.T."/>
            <person name="Mead D.A."/>
        </authorList>
    </citation>
    <scope>NUCLEOTIDE SEQUENCE [LARGE SCALE GENOMIC DNA]</scope>
    <source>
        <strain>DSM 6724 / Z-1310</strain>
    </source>
</reference>